<protein>
    <recommendedName>
        <fullName>ABC transporter NFT1</fullName>
    </recommendedName>
    <alternativeName>
        <fullName>New full-length MRP-type transporter 1</fullName>
    </alternativeName>
</protein>
<proteinExistence type="inferred from homology"/>
<name>NFT1_YEAST</name>
<reference key="1">
    <citation type="journal article" date="1994" name="Nature">
        <title>Complete DNA sequence of yeast chromosome XI.</title>
        <authorList>
            <person name="Dujon B."/>
            <person name="Alexandraki D."/>
            <person name="Andre B."/>
            <person name="Ansorge W."/>
            <person name="Baladron V."/>
            <person name="Ballesta J.P.G."/>
            <person name="Banrevi A."/>
            <person name="Bolle P.-A."/>
            <person name="Bolotin-Fukuhara M."/>
            <person name="Bossier P."/>
            <person name="Bou G."/>
            <person name="Boyer J."/>
            <person name="Buitrago M.J."/>
            <person name="Cheret G."/>
            <person name="Colleaux L."/>
            <person name="Daignan-Fornier B."/>
            <person name="del Rey F."/>
            <person name="Dion C."/>
            <person name="Domdey H."/>
            <person name="Duesterhoeft A."/>
            <person name="Duesterhus S."/>
            <person name="Entian K.-D."/>
            <person name="Erfle H."/>
            <person name="Esteban P.F."/>
            <person name="Feldmann H."/>
            <person name="Fernandes L."/>
            <person name="Fobo G.M."/>
            <person name="Fritz C."/>
            <person name="Fukuhara H."/>
            <person name="Gabel C."/>
            <person name="Gaillon L."/>
            <person name="Garcia-Cantalejo J.M."/>
            <person name="Garcia-Ramirez J.J."/>
            <person name="Gent M.E."/>
            <person name="Ghazvini M."/>
            <person name="Goffeau A."/>
            <person name="Gonzalez A."/>
            <person name="Grothues D."/>
            <person name="Guerreiro P."/>
            <person name="Hegemann J.H."/>
            <person name="Hewitt N."/>
            <person name="Hilger F."/>
            <person name="Hollenberg C.P."/>
            <person name="Horaitis O."/>
            <person name="Indge K.J."/>
            <person name="Jacquier A."/>
            <person name="James C.M."/>
            <person name="Jauniaux J.-C."/>
            <person name="Jimenez A."/>
            <person name="Keuchel H."/>
            <person name="Kirchrath L."/>
            <person name="Kleine K."/>
            <person name="Koetter P."/>
            <person name="Legrain P."/>
            <person name="Liebl S."/>
            <person name="Louis E.J."/>
            <person name="Maia e Silva A."/>
            <person name="Marck C."/>
            <person name="Monnier A.-L."/>
            <person name="Moestl D."/>
            <person name="Mueller S."/>
            <person name="Obermaier B."/>
            <person name="Oliver S.G."/>
            <person name="Pallier C."/>
            <person name="Pascolo S."/>
            <person name="Pfeiffer F."/>
            <person name="Philippsen P."/>
            <person name="Planta R.J."/>
            <person name="Pohl F.M."/>
            <person name="Pohl T.M."/>
            <person name="Poehlmann R."/>
            <person name="Portetelle D."/>
            <person name="Purnelle B."/>
            <person name="Puzos V."/>
            <person name="Ramezani Rad M."/>
            <person name="Rasmussen S.W."/>
            <person name="Remacha M.A."/>
            <person name="Revuelta J.L."/>
            <person name="Richard G.-F."/>
            <person name="Rieger M."/>
            <person name="Rodrigues-Pousada C."/>
            <person name="Rose M."/>
            <person name="Rupp T."/>
            <person name="Santos M.A."/>
            <person name="Schwager C."/>
            <person name="Sensen C."/>
            <person name="Skala J."/>
            <person name="Soares H."/>
            <person name="Sor F."/>
            <person name="Stegemann J."/>
            <person name="Tettelin H."/>
            <person name="Thierry A."/>
            <person name="Tzermia M."/>
            <person name="Urrestarazu L.A."/>
            <person name="van Dyck L."/>
            <person name="van Vliet-Reedijk J.C."/>
            <person name="Valens M."/>
            <person name="Vandenbol M."/>
            <person name="Vilela C."/>
            <person name="Vissers S."/>
            <person name="von Wettstein D."/>
            <person name="Voss H."/>
            <person name="Wiemann S."/>
            <person name="Xu G."/>
            <person name="Zimmermann J."/>
            <person name="Haasemann M."/>
            <person name="Becker I."/>
            <person name="Mewes H.-W."/>
        </authorList>
    </citation>
    <scope>NUCLEOTIDE SEQUENCE [LARGE SCALE GENOMIC DNA]</scope>
    <source>
        <strain>ATCC 204508 / S288c</strain>
    </source>
</reference>
<reference key="2">
    <citation type="journal article" date="2014" name="G3 (Bethesda)">
        <title>The reference genome sequence of Saccharomyces cerevisiae: Then and now.</title>
        <authorList>
            <person name="Engel S.R."/>
            <person name="Dietrich F.S."/>
            <person name="Fisk D.G."/>
            <person name="Binkley G."/>
            <person name="Balakrishnan R."/>
            <person name="Costanzo M.C."/>
            <person name="Dwight S.S."/>
            <person name="Hitz B.C."/>
            <person name="Karra K."/>
            <person name="Nash R.S."/>
            <person name="Weng S."/>
            <person name="Wong E.D."/>
            <person name="Lloyd P."/>
            <person name="Skrzypek M.S."/>
            <person name="Miyasato S.R."/>
            <person name="Simison M."/>
            <person name="Cherry J.M."/>
        </authorList>
    </citation>
    <scope>GENOME REANNOTATION</scope>
    <source>
        <strain>ATCC 204508 / S288c</strain>
    </source>
</reference>
<evidence type="ECO:0000255" key="1"/>
<evidence type="ECO:0000255" key="2">
    <source>
        <dbReference type="PROSITE-ProRule" id="PRU00434"/>
    </source>
</evidence>
<evidence type="ECO:0000255" key="3">
    <source>
        <dbReference type="PROSITE-ProRule" id="PRU00441"/>
    </source>
</evidence>
<evidence type="ECO:0000256" key="4">
    <source>
        <dbReference type="SAM" id="MobiDB-lite"/>
    </source>
</evidence>
<evidence type="ECO:0000305" key="5"/>
<sequence>MIKNGTCPYWERDDLSECARREYIEFKFPLFILLTGMIYAFCKVFRAFYLRGKNHTNEAPEFEEQGNGNHEYARFSVLRLKSAWESRSFCNVNNRSTFDKFKKFIEGAFIVLQLTIHLYILSSMPMDNKKFFHQGFLVQMFLWILLLVVITLRLISASQSFRWVLACKRDLWAVSFYSYASLFTLSILPLRSVFIGKIKDKIMVKYIISETFIDLALLLLLSTSSIEGTRYSFLVENENKKLPPAPTVFGLLTFSRIDRLIWKAYKHCLGNADIWDLDINNKSIAILANFEMSSKKGRLLPNIICYFKAVFISQLFLAFVSSFLNFVPSLLMPRILSYVNDPKSKSWNLVSLYVSSMLVSKIIATTCRGQGLFLGEKGTMQLRTVLISNIYSKTLRRTILKDSTTSLQKNASTSFEENPDSSEAEPRKKSSRKDNSVNNVMSIDAFKVSEAMNTFYLACEAVFMTVTALMILYSLLGWSAFAGTFALLAMIPLNFWCATFYGNYQADQLILTDKRTSGISEALNSIRVIKLLAWENLFYQKIINVRDGEIRLLKKKATIFFLNHLIWFFGPTLVSAITFSVFIKFQNQTLTPTIAFTALSLFAILRTPMDQIASTVSLLIQSFISLERIQDYLNESETRKYEILEQSNTKFGFEDASMEWEAAETSFKLKNISIDFKLNSLNAIIGPTGSGKSSLLLGLLGELNLLSGKIYVPTVESRDDLEIGKDGMTNSMAYCSQTPWLISGTIKDNVVFGEIFNKQKFDDVMKSCCLDKDIKAMTAGIRTDVGDGGFSLSGGQQQRIALARAIYSSSRYLILDDCLSAVDPETALYIYEECLCGPMMKGRTCIITSHNISLVTKRADWLVILDRGEVKSQGKPSDLIKSNEFLRESINNDSKNTTHNQIDLKRSTTSKKTKNGDPEGGNSQDEVCAEVENFEETKMEGSVKFSAYKWLADYFGGLGVVFVFTSSSILIHGITLSQGFWLRYWLDTGSSGSKSTWLYRIVEGHSNIYFLLTYIIIGLVSSFLTSGKVWIAIISGTNVTKKIFAKLLSSILYAKLRFHNVTPTGRIMNRFSKDMDIIDQQLIPNFEGLSYSVVVCLWIILLIGYVTPQFLLFAIPLCALYYTVCTLYLRASRELKRIDNINISPIHQLFAEAIKGVTTIRALADERRFITQSLVAIDRSNAPFFYLNMATEWITYRVDIIGTLVLFSSSVMIIMKAS</sequence>
<accession>P0CE68</accession>
<accession>D6VXG4</accession>
<accession>P36028</accession>
<accession>P36171</accession>
<accession>Q53ZY4</accession>
<accession>Q6Q5L3</accession>
<comment type="subcellular location">
    <subcellularLocation>
        <location>Membrane</location>
        <topology>Multi-pass membrane protein</topology>
    </subcellularLocation>
</comment>
<comment type="similarity">
    <text evidence="5">Belongs to the ABC transporter superfamily. ABCC family. Conjugate transporter (TC 3.A.1.208) subfamily.</text>
</comment>
<comment type="caution">
    <text evidence="5">This is a truncated version of the ABC transporter NFT1. S288c has a stop codon in position 1219, which disrupts the gene coding for this protein and produces two ORFs YKR103W and YKR104W. A contiguous sequence for ABC transporter NFT1 can be found in strains Sigma 1278B, EG123 and SK1 (AC P0CE70).</text>
</comment>
<gene>
    <name type="primary">NFT1</name>
    <name type="ordered locus">YKR103W</name>
</gene>
<organism>
    <name type="scientific">Saccharomyces cerevisiae (strain ATCC 204508 / S288c)</name>
    <name type="common">Baker's yeast</name>
    <dbReference type="NCBI Taxonomy" id="559292"/>
    <lineage>
        <taxon>Eukaryota</taxon>
        <taxon>Fungi</taxon>
        <taxon>Dikarya</taxon>
        <taxon>Ascomycota</taxon>
        <taxon>Saccharomycotina</taxon>
        <taxon>Saccharomycetes</taxon>
        <taxon>Saccharomycetales</taxon>
        <taxon>Saccharomycetaceae</taxon>
        <taxon>Saccharomyces</taxon>
    </lineage>
</organism>
<keyword id="KW-0067">ATP-binding</keyword>
<keyword id="KW-0325">Glycoprotein</keyword>
<keyword id="KW-0472">Membrane</keyword>
<keyword id="KW-0547">Nucleotide-binding</keyword>
<keyword id="KW-1185">Reference proteome</keyword>
<keyword id="KW-0677">Repeat</keyword>
<keyword id="KW-0812">Transmembrane</keyword>
<keyword id="KW-1133">Transmembrane helix</keyword>
<keyword id="KW-0813">Transport</keyword>
<feature type="chain" id="PRO_0000093462" description="ABC transporter NFT1">
    <location>
        <begin position="1"/>
        <end position="1218"/>
    </location>
</feature>
<feature type="topological domain" description="Extracellular" evidence="1">
    <location>
        <begin position="1"/>
        <end position="29"/>
    </location>
</feature>
<feature type="transmembrane region" description="Helical" evidence="3">
    <location>
        <begin position="30"/>
        <end position="50"/>
    </location>
</feature>
<feature type="topological domain" description="Cytoplasmic" evidence="1">
    <location>
        <begin position="51"/>
        <end position="103"/>
    </location>
</feature>
<feature type="transmembrane region" description="Helical" evidence="3">
    <location>
        <begin position="104"/>
        <end position="124"/>
    </location>
</feature>
<feature type="topological domain" description="Extracellular" evidence="1">
    <location>
        <begin position="125"/>
        <end position="130"/>
    </location>
</feature>
<feature type="transmembrane region" description="Helical" evidence="3">
    <location>
        <begin position="131"/>
        <end position="151"/>
    </location>
</feature>
<feature type="topological domain" description="Cytoplasmic" evidence="1">
    <location>
        <begin position="152"/>
        <end position="169"/>
    </location>
</feature>
<feature type="transmembrane region" description="Helical" evidence="3">
    <location>
        <begin position="170"/>
        <end position="190"/>
    </location>
</feature>
<feature type="topological domain" description="Extracellular" evidence="1">
    <location>
        <begin position="191"/>
        <end position="201"/>
    </location>
</feature>
<feature type="transmembrane region" description="Helical" evidence="3">
    <location>
        <begin position="202"/>
        <end position="222"/>
    </location>
</feature>
<feature type="topological domain" description="Cytoplasmic" evidence="1">
    <location>
        <begin position="223"/>
        <end position="302"/>
    </location>
</feature>
<feature type="transmembrane region" description="Helical" evidence="3">
    <location>
        <begin position="303"/>
        <end position="323"/>
    </location>
</feature>
<feature type="topological domain" description="Extracellular" evidence="1">
    <location>
        <begin position="324"/>
        <end position="351"/>
    </location>
</feature>
<feature type="transmembrane region" description="Helical" evidence="3">
    <location>
        <begin position="352"/>
        <end position="374"/>
    </location>
</feature>
<feature type="topological domain" description="Cytoplasmic" evidence="1">
    <location>
        <begin position="375"/>
        <end position="449"/>
    </location>
</feature>
<feature type="transmembrane region" description="Helical" evidence="3">
    <location>
        <begin position="450"/>
        <end position="470"/>
    </location>
</feature>
<feature type="topological domain" description="Extracellular" evidence="1">
    <location>
        <begin position="471"/>
        <end position="481"/>
    </location>
</feature>
<feature type="transmembrane region" description="Helical" evidence="3">
    <location>
        <begin position="482"/>
        <end position="504"/>
    </location>
</feature>
<feature type="topological domain" description="Cytoplasmic" evidence="1">
    <location>
        <begin position="505"/>
        <end position="558"/>
    </location>
</feature>
<feature type="transmembrane region" description="Helical" evidence="3">
    <location>
        <begin position="559"/>
        <end position="579"/>
    </location>
</feature>
<feature type="topological domain" description="Extracellular" evidence="1">
    <location>
        <begin position="580"/>
        <end position="584"/>
    </location>
</feature>
<feature type="transmembrane region" description="Helical" evidence="3">
    <location>
        <begin position="585"/>
        <end position="605"/>
    </location>
</feature>
<feature type="topological domain" description="Cytoplasmic" evidence="1">
    <location>
        <begin position="606"/>
        <end position="953"/>
    </location>
</feature>
<feature type="transmembrane region" description="Helical" evidence="3">
    <location>
        <begin position="954"/>
        <end position="974"/>
    </location>
</feature>
<feature type="topological domain" description="Extracellular" evidence="1">
    <location>
        <begin position="975"/>
        <end position="1013"/>
    </location>
</feature>
<feature type="transmembrane region" description="Helical" evidence="3">
    <location>
        <begin position="1014"/>
        <end position="1034"/>
    </location>
</feature>
<feature type="topological domain" description="Cytoplasmic" evidence="1">
    <location>
        <begin position="1035"/>
        <end position="1082"/>
    </location>
</feature>
<feature type="transmembrane region" description="Helical" evidence="3">
    <location>
        <begin position="1083"/>
        <end position="1105"/>
    </location>
</feature>
<feature type="topological domain" description="Extracellular" evidence="1">
    <location>
        <begin position="1106"/>
        <end position="1109"/>
    </location>
</feature>
<feature type="transmembrane region" description="Helical" evidence="3">
    <location>
        <begin position="1110"/>
        <end position="1132"/>
    </location>
</feature>
<feature type="topological domain" description="Cytoplasmic" evidence="1">
    <location>
        <begin position="1133"/>
        <end position="1197"/>
    </location>
</feature>
<feature type="transmembrane region" description="Helical" evidence="3">
    <location>
        <begin position="1198"/>
        <end position="1218"/>
    </location>
</feature>
<feature type="domain" description="ABC transmembrane type-1 1" evidence="3">
    <location>
        <begin position="311"/>
        <end position="621"/>
    </location>
</feature>
<feature type="domain" description="ABC transporter" evidence="2">
    <location>
        <begin position="651"/>
        <end position="892"/>
    </location>
</feature>
<feature type="domain" description="ABC transmembrane type-1 2" evidence="3">
    <location>
        <begin position="961"/>
        <end position="1218"/>
    </location>
</feature>
<feature type="region of interest" description="Disordered" evidence="4">
    <location>
        <begin position="410"/>
        <end position="434"/>
    </location>
</feature>
<feature type="region of interest" description="Disordered" evidence="4">
    <location>
        <begin position="892"/>
        <end position="926"/>
    </location>
</feature>
<feature type="compositionally biased region" description="Basic and acidic residues" evidence="4">
    <location>
        <begin position="424"/>
        <end position="434"/>
    </location>
</feature>
<feature type="compositionally biased region" description="Polar residues" evidence="4">
    <location>
        <begin position="892"/>
        <end position="901"/>
    </location>
</feature>
<feature type="binding site" evidence="2">
    <location>
        <begin position="686"/>
        <end position="693"/>
    </location>
    <ligand>
        <name>ATP</name>
        <dbReference type="ChEBI" id="CHEBI:30616"/>
    </ligand>
</feature>
<feature type="glycosylation site" description="N-linked (GlcNAc...) asparagine" evidence="1">
    <location>
        <position position="4"/>
    </location>
</feature>
<dbReference type="EMBL" id="Z28328">
    <property type="protein sequence ID" value="CAA82183.1"/>
    <property type="molecule type" value="Genomic_DNA"/>
</dbReference>
<dbReference type="EMBL" id="BK006944">
    <property type="protein sequence ID" value="DAA09254.1"/>
    <property type="molecule type" value="Genomic_DNA"/>
</dbReference>
<dbReference type="PIR" id="S38182">
    <property type="entry name" value="S38182"/>
</dbReference>
<dbReference type="RefSeq" id="NP_013029.3">
    <property type="nucleotide sequence ID" value="NM_001179893.3"/>
</dbReference>
<dbReference type="SMR" id="P0CE68"/>
<dbReference type="BioGRID" id="34234">
    <property type="interactions" value="85"/>
</dbReference>
<dbReference type="FunCoup" id="P0CE68">
    <property type="interactions" value="40"/>
</dbReference>
<dbReference type="IntAct" id="P0CE68">
    <property type="interactions" value="23"/>
</dbReference>
<dbReference type="MINT" id="P0CE68"/>
<dbReference type="STRING" id="4932.YKR103W"/>
<dbReference type="GlyCosmos" id="P0CE68">
    <property type="glycosylation" value="1 site, No reported glycans"/>
</dbReference>
<dbReference type="GlyGen" id="P0CE68">
    <property type="glycosylation" value="2 sites"/>
</dbReference>
<dbReference type="iPTMnet" id="P0CE68"/>
<dbReference type="PaxDb" id="4932-YKR103W"/>
<dbReference type="PeptideAtlas" id="P0CE68"/>
<dbReference type="EnsemblFungi" id="YKR103W_mRNA">
    <property type="protein sequence ID" value="YKR103W"/>
    <property type="gene ID" value="YKR103W"/>
</dbReference>
<dbReference type="GeneID" id="853978"/>
<dbReference type="KEGG" id="sce:YKR103W"/>
<dbReference type="AGR" id="SGD:S000001811"/>
<dbReference type="SGD" id="S000001811">
    <property type="gene designation" value="NFT1"/>
</dbReference>
<dbReference type="VEuPathDB" id="FungiDB:YKR103W"/>
<dbReference type="eggNOG" id="KOG0054">
    <property type="taxonomic scope" value="Eukaryota"/>
</dbReference>
<dbReference type="GeneTree" id="ENSGT00940000176323"/>
<dbReference type="HOGENOM" id="CLU_000604_27_6_1"/>
<dbReference type="InParanoid" id="P0CE68"/>
<dbReference type="OMA" id="HTARHIM"/>
<dbReference type="OrthoDB" id="6500128at2759"/>
<dbReference type="BioCyc" id="YEAST:G3O-32065-MONOMER"/>
<dbReference type="Reactome" id="R-SCE-159418">
    <property type="pathway name" value="Recycling of bile acids and salts"/>
</dbReference>
<dbReference type="Reactome" id="R-SCE-189483">
    <property type="pathway name" value="Heme degradation"/>
</dbReference>
<dbReference type="Reactome" id="R-SCE-382556">
    <property type="pathway name" value="ABC-family proteins mediated transport"/>
</dbReference>
<dbReference type="Reactome" id="R-SCE-9749641">
    <property type="pathway name" value="Aspirin ADME"/>
</dbReference>
<dbReference type="Reactome" id="R-SCE-9753281">
    <property type="pathway name" value="Paracetamol ADME"/>
</dbReference>
<dbReference type="Reactome" id="R-SCE-9754706">
    <property type="pathway name" value="Atorvastatin ADME"/>
</dbReference>
<dbReference type="BioGRID-ORCS" id="853978">
    <property type="hits" value="0 hits in 10 CRISPR screens"/>
</dbReference>
<dbReference type="PRO" id="PR:P0CE68"/>
<dbReference type="Proteomes" id="UP000002311">
    <property type="component" value="Chromosome XI"/>
</dbReference>
<dbReference type="RNAct" id="P0CE68">
    <property type="molecule type" value="protein"/>
</dbReference>
<dbReference type="GO" id="GO:0000329">
    <property type="term" value="C:fungal-type vacuole membrane"/>
    <property type="evidence" value="ECO:0000314"/>
    <property type="project" value="SGD"/>
</dbReference>
<dbReference type="GO" id="GO:0140359">
    <property type="term" value="F:ABC-type transporter activity"/>
    <property type="evidence" value="ECO:0007669"/>
    <property type="project" value="InterPro"/>
</dbReference>
<dbReference type="GO" id="GO:0005524">
    <property type="term" value="F:ATP binding"/>
    <property type="evidence" value="ECO:0007669"/>
    <property type="project" value="UniProtKB-KW"/>
</dbReference>
<dbReference type="GO" id="GO:0016887">
    <property type="term" value="F:ATP hydrolysis activity"/>
    <property type="evidence" value="ECO:0007669"/>
    <property type="project" value="InterPro"/>
</dbReference>
<dbReference type="GO" id="GO:0042626">
    <property type="term" value="F:ATPase-coupled transmembrane transporter activity"/>
    <property type="evidence" value="ECO:0000318"/>
    <property type="project" value="GO_Central"/>
</dbReference>
<dbReference type="GO" id="GO:0016236">
    <property type="term" value="P:macroautophagy"/>
    <property type="evidence" value="ECO:0000315"/>
    <property type="project" value="SGD"/>
</dbReference>
<dbReference type="GO" id="GO:0055085">
    <property type="term" value="P:transmembrane transport"/>
    <property type="evidence" value="ECO:0000318"/>
    <property type="project" value="GO_Central"/>
</dbReference>
<dbReference type="CDD" id="cd18596">
    <property type="entry name" value="ABC_6TM_VMR1_D1_like"/>
    <property type="match status" value="1"/>
</dbReference>
<dbReference type="CDD" id="cd18604">
    <property type="entry name" value="ABC_6TM_VMR1_D2_like"/>
    <property type="match status" value="1"/>
</dbReference>
<dbReference type="CDD" id="cd03250">
    <property type="entry name" value="ABCC_MRP_domain1"/>
    <property type="match status" value="1"/>
</dbReference>
<dbReference type="FunFam" id="1.20.1560.10:FF:000013">
    <property type="entry name" value="ABC transporter C family member 2"/>
    <property type="match status" value="1"/>
</dbReference>
<dbReference type="Gene3D" id="1.20.1560.10">
    <property type="entry name" value="ABC transporter type 1, transmembrane domain"/>
    <property type="match status" value="2"/>
</dbReference>
<dbReference type="Gene3D" id="3.40.50.300">
    <property type="entry name" value="P-loop containing nucleotide triphosphate hydrolases"/>
    <property type="match status" value="1"/>
</dbReference>
<dbReference type="InterPro" id="IPR003593">
    <property type="entry name" value="AAA+_ATPase"/>
</dbReference>
<dbReference type="InterPro" id="IPR011527">
    <property type="entry name" value="ABC1_TM_dom"/>
</dbReference>
<dbReference type="InterPro" id="IPR036640">
    <property type="entry name" value="ABC1_TM_sf"/>
</dbReference>
<dbReference type="InterPro" id="IPR003439">
    <property type="entry name" value="ABC_transporter-like_ATP-bd"/>
</dbReference>
<dbReference type="InterPro" id="IPR017871">
    <property type="entry name" value="ABC_transporter-like_CS"/>
</dbReference>
<dbReference type="InterPro" id="IPR050173">
    <property type="entry name" value="ABC_transporter_C-like"/>
</dbReference>
<dbReference type="InterPro" id="IPR027417">
    <property type="entry name" value="P-loop_NTPase"/>
</dbReference>
<dbReference type="PANTHER" id="PTHR24223:SF353">
    <property type="entry name" value="ABC TRANSPORTER ATP-BINDING PROTEIN_PERMEASE VMR1-RELATED"/>
    <property type="match status" value="1"/>
</dbReference>
<dbReference type="PANTHER" id="PTHR24223">
    <property type="entry name" value="ATP-BINDING CASSETTE SUB-FAMILY C"/>
    <property type="match status" value="1"/>
</dbReference>
<dbReference type="Pfam" id="PF00664">
    <property type="entry name" value="ABC_membrane"/>
    <property type="match status" value="2"/>
</dbReference>
<dbReference type="Pfam" id="PF00005">
    <property type="entry name" value="ABC_tran"/>
    <property type="match status" value="1"/>
</dbReference>
<dbReference type="SMART" id="SM00382">
    <property type="entry name" value="AAA"/>
    <property type="match status" value="1"/>
</dbReference>
<dbReference type="SUPFAM" id="SSF90123">
    <property type="entry name" value="ABC transporter transmembrane region"/>
    <property type="match status" value="2"/>
</dbReference>
<dbReference type="SUPFAM" id="SSF52540">
    <property type="entry name" value="P-loop containing nucleoside triphosphate hydrolases"/>
    <property type="match status" value="1"/>
</dbReference>
<dbReference type="PROSITE" id="PS50929">
    <property type="entry name" value="ABC_TM1F"/>
    <property type="match status" value="2"/>
</dbReference>
<dbReference type="PROSITE" id="PS00211">
    <property type="entry name" value="ABC_TRANSPORTER_1"/>
    <property type="match status" value="1"/>
</dbReference>
<dbReference type="PROSITE" id="PS50893">
    <property type="entry name" value="ABC_TRANSPORTER_2"/>
    <property type="match status" value="1"/>
</dbReference>